<evidence type="ECO:0000255" key="1">
    <source>
        <dbReference type="HAMAP-Rule" id="MF_00836"/>
    </source>
</evidence>
<proteinExistence type="inferred from homology"/>
<accession>Q3SGK8</accession>
<name>PHNN_THIDA</name>
<comment type="function">
    <text evidence="1">Catalyzes the phosphorylation of ribose 1,5-bisphosphate to 5-phospho-D-ribosyl alpha-1-diphosphate (PRPP).</text>
</comment>
<comment type="catalytic activity">
    <reaction evidence="1">
        <text>alpha-D-ribose 1,5-bisphosphate + ATP = 5-phospho-alpha-D-ribose 1-diphosphate + ADP</text>
        <dbReference type="Rhea" id="RHEA:20109"/>
        <dbReference type="ChEBI" id="CHEBI:30616"/>
        <dbReference type="ChEBI" id="CHEBI:58017"/>
        <dbReference type="ChEBI" id="CHEBI:68688"/>
        <dbReference type="ChEBI" id="CHEBI:456216"/>
        <dbReference type="EC" id="2.7.4.23"/>
    </reaction>
</comment>
<comment type="pathway">
    <text evidence="1">Metabolic intermediate biosynthesis; 5-phospho-alpha-D-ribose 1-diphosphate biosynthesis; 5-phospho-alpha-D-ribose 1-diphosphate from D-ribose 5-phosphate (route II): step 3/3.</text>
</comment>
<comment type="similarity">
    <text evidence="1">Belongs to the ribose 1,5-bisphosphokinase family.</text>
</comment>
<sequence>MSEGKLFYVIGPSGSGKDSLMRYGRERLAGDPGVVFAHRYITRPVELHGENHVALTEDEFDARLATGLFALHWDSHGLRYGIGREINLWLAKGCNVVLNGSREYLPEARRRYPGLTAILVNVSPEVLAERLRARGRETEDQISRRVARAKQFMHPEGRLEVIANDAELHVAGERLVQLLSDADASKRAFA</sequence>
<organism>
    <name type="scientific">Thiobacillus denitrificans (strain ATCC 25259 / T1)</name>
    <dbReference type="NCBI Taxonomy" id="292415"/>
    <lineage>
        <taxon>Bacteria</taxon>
        <taxon>Pseudomonadati</taxon>
        <taxon>Pseudomonadota</taxon>
        <taxon>Betaproteobacteria</taxon>
        <taxon>Nitrosomonadales</taxon>
        <taxon>Thiobacillaceae</taxon>
        <taxon>Thiobacillus</taxon>
    </lineage>
</organism>
<gene>
    <name evidence="1" type="primary">phnN</name>
    <name type="ordered locus">Tbd_2289</name>
</gene>
<reference key="1">
    <citation type="journal article" date="2006" name="J. Bacteriol.">
        <title>The genome sequence of the obligately chemolithoautotrophic, facultatively anaerobic bacterium Thiobacillus denitrificans.</title>
        <authorList>
            <person name="Beller H.R."/>
            <person name="Chain P.S."/>
            <person name="Letain T.E."/>
            <person name="Chakicherla A."/>
            <person name="Larimer F.W."/>
            <person name="Richardson P.M."/>
            <person name="Coleman M.A."/>
            <person name="Wood A.P."/>
            <person name="Kelly D.P."/>
        </authorList>
    </citation>
    <scope>NUCLEOTIDE SEQUENCE [LARGE SCALE GENOMIC DNA]</scope>
    <source>
        <strain>ATCC 25259 / T1</strain>
    </source>
</reference>
<feature type="chain" id="PRO_0000412802" description="Ribose 1,5-bisphosphate phosphokinase PhnN">
    <location>
        <begin position="1"/>
        <end position="190"/>
    </location>
</feature>
<feature type="binding site" evidence="1">
    <location>
        <begin position="11"/>
        <end position="18"/>
    </location>
    <ligand>
        <name>ATP</name>
        <dbReference type="ChEBI" id="CHEBI:30616"/>
    </ligand>
</feature>
<protein>
    <recommendedName>
        <fullName evidence="1">Ribose 1,5-bisphosphate phosphokinase PhnN</fullName>
        <ecNumber evidence="1">2.7.4.23</ecNumber>
    </recommendedName>
    <alternativeName>
        <fullName evidence="1">Ribose 1,5-bisphosphokinase</fullName>
    </alternativeName>
</protein>
<keyword id="KW-0067">ATP-binding</keyword>
<keyword id="KW-0547">Nucleotide-binding</keyword>
<keyword id="KW-1185">Reference proteome</keyword>
<keyword id="KW-0808">Transferase</keyword>
<dbReference type="EC" id="2.7.4.23" evidence="1"/>
<dbReference type="EMBL" id="CP000116">
    <property type="protein sequence ID" value="AAZ98242.1"/>
    <property type="molecule type" value="Genomic_DNA"/>
</dbReference>
<dbReference type="RefSeq" id="WP_011312801.1">
    <property type="nucleotide sequence ID" value="NC_007404.1"/>
</dbReference>
<dbReference type="SMR" id="Q3SGK8"/>
<dbReference type="STRING" id="292415.Tbd_2289"/>
<dbReference type="KEGG" id="tbd:Tbd_2289"/>
<dbReference type="eggNOG" id="COG3709">
    <property type="taxonomic scope" value="Bacteria"/>
</dbReference>
<dbReference type="HOGENOM" id="CLU_102477_0_0_4"/>
<dbReference type="OrthoDB" id="341217at2"/>
<dbReference type="UniPathway" id="UPA00087">
    <property type="reaction ID" value="UER00175"/>
</dbReference>
<dbReference type="Proteomes" id="UP000008291">
    <property type="component" value="Chromosome"/>
</dbReference>
<dbReference type="GO" id="GO:0005829">
    <property type="term" value="C:cytosol"/>
    <property type="evidence" value="ECO:0007669"/>
    <property type="project" value="TreeGrafter"/>
</dbReference>
<dbReference type="GO" id="GO:0005524">
    <property type="term" value="F:ATP binding"/>
    <property type="evidence" value="ECO:0007669"/>
    <property type="project" value="UniProtKB-KW"/>
</dbReference>
<dbReference type="GO" id="GO:0033863">
    <property type="term" value="F:ribose 1,5-bisphosphate phosphokinase activity"/>
    <property type="evidence" value="ECO:0007669"/>
    <property type="project" value="UniProtKB-UniRule"/>
</dbReference>
<dbReference type="GO" id="GO:0006015">
    <property type="term" value="P:5-phosphoribose 1-diphosphate biosynthetic process"/>
    <property type="evidence" value="ECO:0007669"/>
    <property type="project" value="UniProtKB-UniRule"/>
</dbReference>
<dbReference type="GO" id="GO:0019634">
    <property type="term" value="P:organic phosphonate metabolic process"/>
    <property type="evidence" value="ECO:0007669"/>
    <property type="project" value="UniProtKB-UniRule"/>
</dbReference>
<dbReference type="Gene3D" id="3.40.50.300">
    <property type="entry name" value="P-loop containing nucleotide triphosphate hydrolases"/>
    <property type="match status" value="1"/>
</dbReference>
<dbReference type="HAMAP" id="MF_00836">
    <property type="entry name" value="PhnN"/>
    <property type="match status" value="1"/>
</dbReference>
<dbReference type="InterPro" id="IPR008145">
    <property type="entry name" value="GK/Ca_channel_bsu"/>
</dbReference>
<dbReference type="InterPro" id="IPR008144">
    <property type="entry name" value="Guanylate_kin-like_dom"/>
</dbReference>
<dbReference type="InterPro" id="IPR027417">
    <property type="entry name" value="P-loop_NTPase"/>
</dbReference>
<dbReference type="InterPro" id="IPR012699">
    <property type="entry name" value="PhnN"/>
</dbReference>
<dbReference type="NCBIfam" id="TIGR02322">
    <property type="entry name" value="phosphon_PhnN"/>
    <property type="match status" value="1"/>
</dbReference>
<dbReference type="NCBIfam" id="NF007485">
    <property type="entry name" value="PRK10078.1"/>
    <property type="match status" value="1"/>
</dbReference>
<dbReference type="PANTHER" id="PTHR23117">
    <property type="entry name" value="GUANYLATE KINASE-RELATED"/>
    <property type="match status" value="1"/>
</dbReference>
<dbReference type="PANTHER" id="PTHR23117:SF8">
    <property type="entry name" value="RIBOSE 1,5-BISPHOSPHATE PHOSPHOKINASE PHNN"/>
    <property type="match status" value="1"/>
</dbReference>
<dbReference type="SMART" id="SM00072">
    <property type="entry name" value="GuKc"/>
    <property type="match status" value="1"/>
</dbReference>
<dbReference type="SUPFAM" id="SSF52540">
    <property type="entry name" value="P-loop containing nucleoside triphosphate hydrolases"/>
    <property type="match status" value="1"/>
</dbReference>
<dbReference type="PROSITE" id="PS50052">
    <property type="entry name" value="GUANYLATE_KINASE_2"/>
    <property type="match status" value="1"/>
</dbReference>